<organism>
    <name type="scientific">Bordetella avium (strain 197N)</name>
    <dbReference type="NCBI Taxonomy" id="360910"/>
    <lineage>
        <taxon>Bacteria</taxon>
        <taxon>Pseudomonadati</taxon>
        <taxon>Pseudomonadota</taxon>
        <taxon>Betaproteobacteria</taxon>
        <taxon>Burkholderiales</taxon>
        <taxon>Alcaligenaceae</taxon>
        <taxon>Bordetella</taxon>
    </lineage>
</organism>
<evidence type="ECO:0000255" key="1">
    <source>
        <dbReference type="HAMAP-Rule" id="MF_00225"/>
    </source>
</evidence>
<sequence length="349" mass="37027">MSILFNAYPLARPALFAMDAETAHEVTLASLQRAYDCGTTRRWLHDQPQLPTTLMGMTLRNPVGLAAGLDKNGAFIDALGNLGFGFVEVGTVTPRAQSGNPKPRMFRLPKANALINRLGFNNQGLDAFLANVTRSRFRSQGGILGLNIGKNADTPIERAADDYLIGLAGVYPHADYVTVNISSPNTKNLRALQGGDELSQLLAALRDKRAELAQQHARQVPLVVKIAPDLSQEQIDIIADTLLSNGVDGVIATNTTLSREAVQGMPHAAETGGLSGAPVHELSLAVIERLRQRVGSALAIIGVGGILSGQQAREKIAAGADAVQLYTGLIYRGPALVGECVGTLKNTAR</sequence>
<reference key="1">
    <citation type="journal article" date="2006" name="J. Bacteriol.">
        <title>Comparison of the genome sequence of the poultry pathogen Bordetella avium with those of B. bronchiseptica, B. pertussis, and B. parapertussis reveals extensive diversity in surface structures associated with host interaction.</title>
        <authorList>
            <person name="Sebaihia M."/>
            <person name="Preston A."/>
            <person name="Maskell D.J."/>
            <person name="Kuzmiak H."/>
            <person name="Connell T.D."/>
            <person name="King N.D."/>
            <person name="Orndorff P.E."/>
            <person name="Miyamoto D.M."/>
            <person name="Thomson N.R."/>
            <person name="Harris D."/>
            <person name="Goble A."/>
            <person name="Lord A."/>
            <person name="Murphy L."/>
            <person name="Quail M.A."/>
            <person name="Rutter S."/>
            <person name="Squares R."/>
            <person name="Squares S."/>
            <person name="Woodward J."/>
            <person name="Parkhill J."/>
            <person name="Temple L.M."/>
        </authorList>
    </citation>
    <scope>NUCLEOTIDE SEQUENCE [LARGE SCALE GENOMIC DNA]</scope>
    <source>
        <strain>197N</strain>
    </source>
</reference>
<dbReference type="EC" id="1.3.5.2" evidence="1"/>
<dbReference type="EMBL" id="AM167904">
    <property type="protein sequence ID" value="CAJ50364.1"/>
    <property type="molecule type" value="Genomic_DNA"/>
</dbReference>
<dbReference type="RefSeq" id="WP_012418395.1">
    <property type="nucleotide sequence ID" value="NC_010645.1"/>
</dbReference>
<dbReference type="SMR" id="Q2KW44"/>
<dbReference type="STRING" id="360910.BAV2753"/>
<dbReference type="GeneID" id="92934000"/>
<dbReference type="KEGG" id="bav:BAV2753"/>
<dbReference type="eggNOG" id="COG0167">
    <property type="taxonomic scope" value="Bacteria"/>
</dbReference>
<dbReference type="HOGENOM" id="CLU_013640_2_0_4"/>
<dbReference type="OrthoDB" id="9802377at2"/>
<dbReference type="UniPathway" id="UPA00070">
    <property type="reaction ID" value="UER00946"/>
</dbReference>
<dbReference type="Proteomes" id="UP000001977">
    <property type="component" value="Chromosome"/>
</dbReference>
<dbReference type="GO" id="GO:0005737">
    <property type="term" value="C:cytoplasm"/>
    <property type="evidence" value="ECO:0007669"/>
    <property type="project" value="InterPro"/>
</dbReference>
<dbReference type="GO" id="GO:0005886">
    <property type="term" value="C:plasma membrane"/>
    <property type="evidence" value="ECO:0007669"/>
    <property type="project" value="UniProtKB-SubCell"/>
</dbReference>
<dbReference type="GO" id="GO:0106430">
    <property type="term" value="F:dihydroorotate dehydrogenase (quinone) activity"/>
    <property type="evidence" value="ECO:0007669"/>
    <property type="project" value="UniProtKB-EC"/>
</dbReference>
<dbReference type="GO" id="GO:0006207">
    <property type="term" value="P:'de novo' pyrimidine nucleobase biosynthetic process"/>
    <property type="evidence" value="ECO:0007669"/>
    <property type="project" value="InterPro"/>
</dbReference>
<dbReference type="GO" id="GO:0044205">
    <property type="term" value="P:'de novo' UMP biosynthetic process"/>
    <property type="evidence" value="ECO:0007669"/>
    <property type="project" value="UniProtKB-UniRule"/>
</dbReference>
<dbReference type="CDD" id="cd04738">
    <property type="entry name" value="DHOD_2_like"/>
    <property type="match status" value="1"/>
</dbReference>
<dbReference type="FunFam" id="3.20.20.70:FF:000028">
    <property type="entry name" value="Dihydroorotate dehydrogenase (quinone)"/>
    <property type="match status" value="1"/>
</dbReference>
<dbReference type="Gene3D" id="3.20.20.70">
    <property type="entry name" value="Aldolase class I"/>
    <property type="match status" value="1"/>
</dbReference>
<dbReference type="HAMAP" id="MF_00225">
    <property type="entry name" value="DHO_dh_type2"/>
    <property type="match status" value="1"/>
</dbReference>
<dbReference type="InterPro" id="IPR013785">
    <property type="entry name" value="Aldolase_TIM"/>
</dbReference>
<dbReference type="InterPro" id="IPR050074">
    <property type="entry name" value="DHO_dehydrogenase"/>
</dbReference>
<dbReference type="InterPro" id="IPR012135">
    <property type="entry name" value="Dihydroorotate_DH_1_2"/>
</dbReference>
<dbReference type="InterPro" id="IPR005719">
    <property type="entry name" value="Dihydroorotate_DH_2"/>
</dbReference>
<dbReference type="InterPro" id="IPR005720">
    <property type="entry name" value="Dihydroorotate_DH_cat"/>
</dbReference>
<dbReference type="InterPro" id="IPR001295">
    <property type="entry name" value="Dihydroorotate_DH_CS"/>
</dbReference>
<dbReference type="NCBIfam" id="NF003644">
    <property type="entry name" value="PRK05286.1-1"/>
    <property type="match status" value="1"/>
</dbReference>
<dbReference type="NCBIfam" id="NF003645">
    <property type="entry name" value="PRK05286.1-2"/>
    <property type="match status" value="1"/>
</dbReference>
<dbReference type="NCBIfam" id="NF003646">
    <property type="entry name" value="PRK05286.1-4"/>
    <property type="match status" value="1"/>
</dbReference>
<dbReference type="NCBIfam" id="NF003652">
    <property type="entry name" value="PRK05286.2-5"/>
    <property type="match status" value="1"/>
</dbReference>
<dbReference type="NCBIfam" id="TIGR01036">
    <property type="entry name" value="pyrD_sub2"/>
    <property type="match status" value="1"/>
</dbReference>
<dbReference type="PANTHER" id="PTHR48109:SF4">
    <property type="entry name" value="DIHYDROOROTATE DEHYDROGENASE (QUINONE), MITOCHONDRIAL"/>
    <property type="match status" value="1"/>
</dbReference>
<dbReference type="PANTHER" id="PTHR48109">
    <property type="entry name" value="DIHYDROOROTATE DEHYDROGENASE (QUINONE), MITOCHONDRIAL-RELATED"/>
    <property type="match status" value="1"/>
</dbReference>
<dbReference type="Pfam" id="PF01180">
    <property type="entry name" value="DHO_dh"/>
    <property type="match status" value="1"/>
</dbReference>
<dbReference type="PIRSF" id="PIRSF000164">
    <property type="entry name" value="DHO_oxidase"/>
    <property type="match status" value="1"/>
</dbReference>
<dbReference type="SUPFAM" id="SSF51395">
    <property type="entry name" value="FMN-linked oxidoreductases"/>
    <property type="match status" value="1"/>
</dbReference>
<dbReference type="PROSITE" id="PS00911">
    <property type="entry name" value="DHODEHASE_1"/>
    <property type="match status" value="1"/>
</dbReference>
<dbReference type="PROSITE" id="PS00912">
    <property type="entry name" value="DHODEHASE_2"/>
    <property type="match status" value="1"/>
</dbReference>
<protein>
    <recommendedName>
        <fullName evidence="1">Dihydroorotate dehydrogenase (quinone)</fullName>
        <ecNumber evidence="1">1.3.5.2</ecNumber>
    </recommendedName>
    <alternativeName>
        <fullName evidence="1">DHOdehase</fullName>
        <shortName evidence="1">DHOD</shortName>
        <shortName evidence="1">DHODase</shortName>
    </alternativeName>
    <alternativeName>
        <fullName evidence="1">Dihydroorotate oxidase</fullName>
    </alternativeName>
</protein>
<name>PYRD_BORA1</name>
<keyword id="KW-1003">Cell membrane</keyword>
<keyword id="KW-0285">Flavoprotein</keyword>
<keyword id="KW-0288">FMN</keyword>
<keyword id="KW-0472">Membrane</keyword>
<keyword id="KW-0560">Oxidoreductase</keyword>
<keyword id="KW-0665">Pyrimidine biosynthesis</keyword>
<keyword id="KW-1185">Reference proteome</keyword>
<accession>Q2KW44</accession>
<gene>
    <name evidence="1" type="primary">pyrD</name>
    <name type="ordered locus">BAV2753</name>
</gene>
<proteinExistence type="inferred from homology"/>
<comment type="function">
    <text evidence="1">Catalyzes the conversion of dihydroorotate to orotate with quinone as electron acceptor.</text>
</comment>
<comment type="catalytic activity">
    <reaction evidence="1">
        <text>(S)-dihydroorotate + a quinone = orotate + a quinol</text>
        <dbReference type="Rhea" id="RHEA:30187"/>
        <dbReference type="ChEBI" id="CHEBI:24646"/>
        <dbReference type="ChEBI" id="CHEBI:30839"/>
        <dbReference type="ChEBI" id="CHEBI:30864"/>
        <dbReference type="ChEBI" id="CHEBI:132124"/>
        <dbReference type="EC" id="1.3.5.2"/>
    </reaction>
</comment>
<comment type="cofactor">
    <cofactor evidence="1">
        <name>FMN</name>
        <dbReference type="ChEBI" id="CHEBI:58210"/>
    </cofactor>
    <text evidence="1">Binds 1 FMN per subunit.</text>
</comment>
<comment type="pathway">
    <text evidence="1">Pyrimidine metabolism; UMP biosynthesis via de novo pathway; orotate from (S)-dihydroorotate (quinone route): step 1/1.</text>
</comment>
<comment type="subunit">
    <text evidence="1">Monomer.</text>
</comment>
<comment type="subcellular location">
    <subcellularLocation>
        <location evidence="1">Cell membrane</location>
        <topology evidence="1">Peripheral membrane protein</topology>
    </subcellularLocation>
</comment>
<comment type="similarity">
    <text evidence="1">Belongs to the dihydroorotate dehydrogenase family. Type 2 subfamily.</text>
</comment>
<feature type="chain" id="PRO_1000024154" description="Dihydroorotate dehydrogenase (quinone)">
    <location>
        <begin position="1"/>
        <end position="349"/>
    </location>
</feature>
<feature type="active site" description="Nucleophile" evidence="1">
    <location>
        <position position="183"/>
    </location>
</feature>
<feature type="binding site" evidence="1">
    <location>
        <begin position="67"/>
        <end position="71"/>
    </location>
    <ligand>
        <name>FMN</name>
        <dbReference type="ChEBI" id="CHEBI:58210"/>
    </ligand>
</feature>
<feature type="binding site" evidence="1">
    <location>
        <position position="71"/>
    </location>
    <ligand>
        <name>substrate</name>
    </ligand>
</feature>
<feature type="binding site" evidence="1">
    <location>
        <position position="91"/>
    </location>
    <ligand>
        <name>FMN</name>
        <dbReference type="ChEBI" id="CHEBI:58210"/>
    </ligand>
</feature>
<feature type="binding site" evidence="1">
    <location>
        <begin position="116"/>
        <end position="120"/>
    </location>
    <ligand>
        <name>substrate</name>
    </ligand>
</feature>
<feature type="binding site" evidence="1">
    <location>
        <position position="147"/>
    </location>
    <ligand>
        <name>FMN</name>
        <dbReference type="ChEBI" id="CHEBI:58210"/>
    </ligand>
</feature>
<feature type="binding site" evidence="1">
    <location>
        <position position="180"/>
    </location>
    <ligand>
        <name>FMN</name>
        <dbReference type="ChEBI" id="CHEBI:58210"/>
    </ligand>
</feature>
<feature type="binding site" evidence="1">
    <location>
        <position position="180"/>
    </location>
    <ligand>
        <name>substrate</name>
    </ligand>
</feature>
<feature type="binding site" evidence="1">
    <location>
        <position position="185"/>
    </location>
    <ligand>
        <name>substrate</name>
    </ligand>
</feature>
<feature type="binding site" evidence="1">
    <location>
        <position position="225"/>
    </location>
    <ligand>
        <name>FMN</name>
        <dbReference type="ChEBI" id="CHEBI:58210"/>
    </ligand>
</feature>
<feature type="binding site" evidence="1">
    <location>
        <position position="253"/>
    </location>
    <ligand>
        <name>FMN</name>
        <dbReference type="ChEBI" id="CHEBI:58210"/>
    </ligand>
</feature>
<feature type="binding site" evidence="1">
    <location>
        <begin position="254"/>
        <end position="255"/>
    </location>
    <ligand>
        <name>substrate</name>
    </ligand>
</feature>
<feature type="binding site" evidence="1">
    <location>
        <position position="276"/>
    </location>
    <ligand>
        <name>FMN</name>
        <dbReference type="ChEBI" id="CHEBI:58210"/>
    </ligand>
</feature>
<feature type="binding site" evidence="1">
    <location>
        <position position="305"/>
    </location>
    <ligand>
        <name>FMN</name>
        <dbReference type="ChEBI" id="CHEBI:58210"/>
    </ligand>
</feature>
<feature type="binding site" evidence="1">
    <location>
        <begin position="326"/>
        <end position="327"/>
    </location>
    <ligand>
        <name>FMN</name>
        <dbReference type="ChEBI" id="CHEBI:58210"/>
    </ligand>
</feature>